<sequence>MTVNLHDSAYDLEQALRQSEEYSRLKNLYDEVNGDPSAKKMFDNFRDIQLNLQQKQMNGEDITQEEVEQAQKSVALVQQHEKISQLMEAEQRMSMLIADLNKIIMKPLEELYGNPES</sequence>
<proteinExistence type="inferred from homology"/>
<gene>
    <name type="ordered locus">BLi01058</name>
    <name type="ordered locus">BL02870</name>
</gene>
<reference key="1">
    <citation type="journal article" date="2004" name="J. Mol. Microbiol. Biotechnol.">
        <title>The complete genome sequence of Bacillus licheniformis DSM13, an organism with great industrial potential.</title>
        <authorList>
            <person name="Veith B."/>
            <person name="Herzberg C."/>
            <person name="Steckel S."/>
            <person name="Feesche J."/>
            <person name="Maurer K.H."/>
            <person name="Ehrenreich P."/>
            <person name="Baeumer S."/>
            <person name="Henne A."/>
            <person name="Liesegang H."/>
            <person name="Merkl R."/>
            <person name="Ehrenreich A."/>
            <person name="Gottschalk G."/>
        </authorList>
    </citation>
    <scope>NUCLEOTIDE SEQUENCE [LARGE SCALE GENOMIC DNA]</scope>
    <source>
        <strain>ATCC 14580 / DSM 13 / JCM 2505 / CCUG 7422 / NBRC 12200 / NCIMB 9375 / NCTC 10341 / NRRL NRS-1264 / Gibson 46</strain>
    </source>
</reference>
<reference key="2">
    <citation type="journal article" date="2004" name="Genome Biol.">
        <title>Complete genome sequence of the industrial bacterium Bacillus licheniformis and comparisons with closely related Bacillus species.</title>
        <authorList>
            <person name="Rey M.W."/>
            <person name="Ramaiya P."/>
            <person name="Nelson B.A."/>
            <person name="Brody-Karpin S.D."/>
            <person name="Zaretsky E.J."/>
            <person name="Tang M."/>
            <person name="Lopez de Leon A."/>
            <person name="Xiang H."/>
            <person name="Gusti V."/>
            <person name="Clausen I.G."/>
            <person name="Olsen P.B."/>
            <person name="Rasmussen M.D."/>
            <person name="Andersen J.T."/>
            <person name="Joergensen P.L."/>
            <person name="Larsen T.S."/>
            <person name="Sorokin A."/>
            <person name="Bolotin A."/>
            <person name="Lapidus A."/>
            <person name="Galleron N."/>
            <person name="Ehrlich S.D."/>
            <person name="Berka R.M."/>
        </authorList>
    </citation>
    <scope>NUCLEOTIDE SEQUENCE [LARGE SCALE GENOMIC DNA]</scope>
    <source>
        <strain>ATCC 14580 / DSM 13 / JCM 2505 / CCUG 7422 / NBRC 12200 / NCIMB 9375 / NCTC 10341 / NRRL NRS-1264 / Gibson 46</strain>
    </source>
</reference>
<comment type="similarity">
    <text evidence="1">Belongs to the UPF0342 family.</text>
</comment>
<accession>Q65LU8</accession>
<feature type="chain" id="PRO_0000109970" description="UPF0342 protein BLi01058/BL02870">
    <location>
        <begin position="1"/>
        <end position="117"/>
    </location>
</feature>
<dbReference type="EMBL" id="AE017333">
    <property type="protein sequence ID" value="AAU39966.1"/>
    <property type="molecule type" value="Genomic_DNA"/>
</dbReference>
<dbReference type="EMBL" id="CP000002">
    <property type="protein sequence ID" value="AAU22623.1"/>
    <property type="molecule type" value="Genomic_DNA"/>
</dbReference>
<dbReference type="RefSeq" id="WP_003180211.1">
    <property type="nucleotide sequence ID" value="NC_006322.1"/>
</dbReference>
<dbReference type="SMR" id="Q65LU8"/>
<dbReference type="STRING" id="279010.BL02870"/>
<dbReference type="KEGG" id="bld:BLi01058"/>
<dbReference type="KEGG" id="bli:BL02870"/>
<dbReference type="PATRIC" id="fig|279010.13.peg.1039"/>
<dbReference type="eggNOG" id="COG3679">
    <property type="taxonomic scope" value="Bacteria"/>
</dbReference>
<dbReference type="HOGENOM" id="CLU_140243_3_0_9"/>
<dbReference type="Proteomes" id="UP000000606">
    <property type="component" value="Chromosome"/>
</dbReference>
<dbReference type="Gene3D" id="1.20.1500.10">
    <property type="entry name" value="YheA/YmcA-like"/>
    <property type="match status" value="1"/>
</dbReference>
<dbReference type="HAMAP" id="MF_01526">
    <property type="entry name" value="UPF0342"/>
    <property type="match status" value="1"/>
</dbReference>
<dbReference type="InterPro" id="IPR010368">
    <property type="entry name" value="Com_YlbF"/>
</dbReference>
<dbReference type="InterPro" id="IPR023378">
    <property type="entry name" value="YheA/YmcA-like_dom_sf"/>
</dbReference>
<dbReference type="Pfam" id="PF06133">
    <property type="entry name" value="Com_YlbF"/>
    <property type="match status" value="1"/>
</dbReference>
<dbReference type="SUPFAM" id="SSF158622">
    <property type="entry name" value="YheA/YmcA-like"/>
    <property type="match status" value="1"/>
</dbReference>
<protein>
    <recommendedName>
        <fullName evidence="1">UPF0342 protein BLi01058/BL02870</fullName>
    </recommendedName>
</protein>
<name>Y1058_BACLD</name>
<keyword id="KW-1185">Reference proteome</keyword>
<evidence type="ECO:0000255" key="1">
    <source>
        <dbReference type="HAMAP-Rule" id="MF_01526"/>
    </source>
</evidence>
<organism>
    <name type="scientific">Bacillus licheniformis (strain ATCC 14580 / DSM 13 / JCM 2505 / CCUG 7422 / NBRC 12200 / NCIMB 9375 / NCTC 10341 / NRRL NRS-1264 / Gibson 46)</name>
    <dbReference type="NCBI Taxonomy" id="279010"/>
    <lineage>
        <taxon>Bacteria</taxon>
        <taxon>Bacillati</taxon>
        <taxon>Bacillota</taxon>
        <taxon>Bacilli</taxon>
        <taxon>Bacillales</taxon>
        <taxon>Bacillaceae</taxon>
        <taxon>Bacillus</taxon>
    </lineage>
</organism>